<proteinExistence type="inferred from homology"/>
<accession>Q5X6G0</accession>
<feature type="chain" id="PRO_1000193388" description="DNA repair protein RecO">
    <location>
        <begin position="1"/>
        <end position="229"/>
    </location>
</feature>
<name>RECO_LEGPA</name>
<comment type="function">
    <text evidence="1">Involved in DNA repair and RecF pathway recombination.</text>
</comment>
<comment type="similarity">
    <text evidence="1">Belongs to the RecO family.</text>
</comment>
<reference key="1">
    <citation type="journal article" date="2004" name="Nat. Genet.">
        <title>Evidence in the Legionella pneumophila genome for exploitation of host cell functions and high genome plasticity.</title>
        <authorList>
            <person name="Cazalet C."/>
            <person name="Rusniok C."/>
            <person name="Brueggemann H."/>
            <person name="Zidane N."/>
            <person name="Magnier A."/>
            <person name="Ma L."/>
            <person name="Tichit M."/>
            <person name="Jarraud S."/>
            <person name="Bouchier C."/>
            <person name="Vandenesch F."/>
            <person name="Kunst F."/>
            <person name="Etienne J."/>
            <person name="Glaser P."/>
            <person name="Buchrieser C."/>
        </authorList>
    </citation>
    <scope>NUCLEOTIDE SEQUENCE [LARGE SCALE GENOMIC DNA]</scope>
    <source>
        <strain>Paris</strain>
    </source>
</reference>
<sequence length="229" mass="25907">MTSKSLNAWVIHKQWSGDTSARLKLFTRELGLINCLCKGGRTPKKQSLLQAFIPLWVSIEERYDQYYTRNIESTSSRLDLEGHSLFSGLYINELLYYTLSPDFPDSDLFDAYLFTLNGIALAREREAIEALLRRFEWALLKACGYTFSFLHEARTGELIVPDSHYQFVAGEGFILGGDKKIPGEHLLAIAADNLSESAYLKSAKFIMRQAIDHLLGGREIKARSLYGPA</sequence>
<dbReference type="EMBL" id="CR628336">
    <property type="protein sequence ID" value="CAH12156.1"/>
    <property type="molecule type" value="Genomic_DNA"/>
</dbReference>
<dbReference type="RefSeq" id="WP_011213368.1">
    <property type="nucleotide sequence ID" value="NC_006368.1"/>
</dbReference>
<dbReference type="SMR" id="Q5X6G0"/>
<dbReference type="KEGG" id="lpp:lpp1005"/>
<dbReference type="LegioList" id="lpp1005"/>
<dbReference type="HOGENOM" id="CLU_066645_1_0_6"/>
<dbReference type="GO" id="GO:0043590">
    <property type="term" value="C:bacterial nucleoid"/>
    <property type="evidence" value="ECO:0007669"/>
    <property type="project" value="TreeGrafter"/>
</dbReference>
<dbReference type="GO" id="GO:0006310">
    <property type="term" value="P:DNA recombination"/>
    <property type="evidence" value="ECO:0007669"/>
    <property type="project" value="UniProtKB-UniRule"/>
</dbReference>
<dbReference type="GO" id="GO:0006302">
    <property type="term" value="P:double-strand break repair"/>
    <property type="evidence" value="ECO:0007669"/>
    <property type="project" value="TreeGrafter"/>
</dbReference>
<dbReference type="Gene3D" id="2.40.50.140">
    <property type="entry name" value="Nucleic acid-binding proteins"/>
    <property type="match status" value="1"/>
</dbReference>
<dbReference type="Gene3D" id="1.20.1440.120">
    <property type="entry name" value="Recombination protein O, C-terminal domain"/>
    <property type="match status" value="1"/>
</dbReference>
<dbReference type="HAMAP" id="MF_00201">
    <property type="entry name" value="RecO"/>
    <property type="match status" value="1"/>
</dbReference>
<dbReference type="InterPro" id="IPR022572">
    <property type="entry name" value="DNA_rep/recomb_RecO_N"/>
</dbReference>
<dbReference type="InterPro" id="IPR012340">
    <property type="entry name" value="NA-bd_OB-fold"/>
</dbReference>
<dbReference type="InterPro" id="IPR003717">
    <property type="entry name" value="RecO"/>
</dbReference>
<dbReference type="InterPro" id="IPR042242">
    <property type="entry name" value="RecO_C"/>
</dbReference>
<dbReference type="NCBIfam" id="TIGR00613">
    <property type="entry name" value="reco"/>
    <property type="match status" value="1"/>
</dbReference>
<dbReference type="PANTHER" id="PTHR33991">
    <property type="entry name" value="DNA REPAIR PROTEIN RECO"/>
    <property type="match status" value="1"/>
</dbReference>
<dbReference type="PANTHER" id="PTHR33991:SF1">
    <property type="entry name" value="DNA REPAIR PROTEIN RECO"/>
    <property type="match status" value="1"/>
</dbReference>
<dbReference type="Pfam" id="PF02565">
    <property type="entry name" value="RecO_C"/>
    <property type="match status" value="1"/>
</dbReference>
<dbReference type="Pfam" id="PF11967">
    <property type="entry name" value="RecO_N"/>
    <property type="match status" value="1"/>
</dbReference>
<dbReference type="SUPFAM" id="SSF50249">
    <property type="entry name" value="Nucleic acid-binding proteins"/>
    <property type="match status" value="1"/>
</dbReference>
<keyword id="KW-0227">DNA damage</keyword>
<keyword id="KW-0233">DNA recombination</keyword>
<keyword id="KW-0234">DNA repair</keyword>
<protein>
    <recommendedName>
        <fullName evidence="1">DNA repair protein RecO</fullName>
    </recommendedName>
    <alternativeName>
        <fullName evidence="1">Recombination protein O</fullName>
    </alternativeName>
</protein>
<organism>
    <name type="scientific">Legionella pneumophila (strain Paris)</name>
    <dbReference type="NCBI Taxonomy" id="297246"/>
    <lineage>
        <taxon>Bacteria</taxon>
        <taxon>Pseudomonadati</taxon>
        <taxon>Pseudomonadota</taxon>
        <taxon>Gammaproteobacteria</taxon>
        <taxon>Legionellales</taxon>
        <taxon>Legionellaceae</taxon>
        <taxon>Legionella</taxon>
    </lineage>
</organism>
<gene>
    <name evidence="1" type="primary">recO</name>
    <name type="ordered locus">lpp1005</name>
</gene>
<evidence type="ECO:0000255" key="1">
    <source>
        <dbReference type="HAMAP-Rule" id="MF_00201"/>
    </source>
</evidence>